<feature type="chain" id="PRO_0000100113" description="Putative 3-methyladenine DNA glycosylase">
    <location>
        <begin position="1"/>
        <end position="213"/>
    </location>
</feature>
<feature type="region of interest" description="Disordered" evidence="2">
    <location>
        <begin position="165"/>
        <end position="187"/>
    </location>
</feature>
<keyword id="KW-0227">DNA damage</keyword>
<keyword id="KW-0234">DNA repair</keyword>
<keyword id="KW-0378">Hydrolase</keyword>
<keyword id="KW-1185">Reference proteome</keyword>
<name>3MGH_STRAW</name>
<dbReference type="EC" id="3.2.2.-" evidence="1"/>
<dbReference type="EMBL" id="BA000030">
    <property type="protein sequence ID" value="BAC74197.1"/>
    <property type="molecule type" value="Genomic_DNA"/>
</dbReference>
<dbReference type="RefSeq" id="WP_010987886.1">
    <property type="nucleotide sequence ID" value="NZ_JZJK01000089.1"/>
</dbReference>
<dbReference type="SMR" id="Q829C5"/>
<dbReference type="GeneID" id="41543559"/>
<dbReference type="KEGG" id="sma:SAVERM_6486"/>
<dbReference type="eggNOG" id="COG2094">
    <property type="taxonomic scope" value="Bacteria"/>
</dbReference>
<dbReference type="HOGENOM" id="CLU_060471_3_0_11"/>
<dbReference type="OrthoDB" id="9794313at2"/>
<dbReference type="Proteomes" id="UP000000428">
    <property type="component" value="Chromosome"/>
</dbReference>
<dbReference type="GO" id="GO:0003905">
    <property type="term" value="F:alkylbase DNA N-glycosylase activity"/>
    <property type="evidence" value="ECO:0007669"/>
    <property type="project" value="InterPro"/>
</dbReference>
<dbReference type="GO" id="GO:0003677">
    <property type="term" value="F:DNA binding"/>
    <property type="evidence" value="ECO:0007669"/>
    <property type="project" value="InterPro"/>
</dbReference>
<dbReference type="GO" id="GO:0006284">
    <property type="term" value="P:base-excision repair"/>
    <property type="evidence" value="ECO:0007669"/>
    <property type="project" value="InterPro"/>
</dbReference>
<dbReference type="CDD" id="cd00540">
    <property type="entry name" value="AAG"/>
    <property type="match status" value="1"/>
</dbReference>
<dbReference type="FunFam" id="3.10.300.10:FF:000001">
    <property type="entry name" value="Putative 3-methyladenine DNA glycosylase"/>
    <property type="match status" value="1"/>
</dbReference>
<dbReference type="Gene3D" id="3.10.300.10">
    <property type="entry name" value="Methylpurine-DNA glycosylase (MPG)"/>
    <property type="match status" value="1"/>
</dbReference>
<dbReference type="HAMAP" id="MF_00527">
    <property type="entry name" value="3MGH"/>
    <property type="match status" value="1"/>
</dbReference>
<dbReference type="InterPro" id="IPR011034">
    <property type="entry name" value="Formyl_transferase-like_C_sf"/>
</dbReference>
<dbReference type="InterPro" id="IPR003180">
    <property type="entry name" value="MPG"/>
</dbReference>
<dbReference type="InterPro" id="IPR036995">
    <property type="entry name" value="MPG_sf"/>
</dbReference>
<dbReference type="NCBIfam" id="TIGR00567">
    <property type="entry name" value="3mg"/>
    <property type="match status" value="1"/>
</dbReference>
<dbReference type="NCBIfam" id="NF002003">
    <property type="entry name" value="PRK00802.1-3"/>
    <property type="match status" value="1"/>
</dbReference>
<dbReference type="PANTHER" id="PTHR10429">
    <property type="entry name" value="DNA-3-METHYLADENINE GLYCOSYLASE"/>
    <property type="match status" value="1"/>
</dbReference>
<dbReference type="PANTHER" id="PTHR10429:SF0">
    <property type="entry name" value="DNA-3-METHYLADENINE GLYCOSYLASE"/>
    <property type="match status" value="1"/>
</dbReference>
<dbReference type="Pfam" id="PF02245">
    <property type="entry name" value="Pur_DNA_glyco"/>
    <property type="match status" value="1"/>
</dbReference>
<dbReference type="SUPFAM" id="SSF50486">
    <property type="entry name" value="FMT C-terminal domain-like"/>
    <property type="match status" value="1"/>
</dbReference>
<proteinExistence type="inferred from homology"/>
<gene>
    <name type="ordered locus">SAV_6486</name>
</gene>
<protein>
    <recommendedName>
        <fullName evidence="1">Putative 3-methyladenine DNA glycosylase</fullName>
        <ecNumber evidence="1">3.2.2.-</ecNumber>
    </recommendedName>
</protein>
<reference key="1">
    <citation type="journal article" date="2001" name="Proc. Natl. Acad. Sci. U.S.A.">
        <title>Genome sequence of an industrial microorganism Streptomyces avermitilis: deducing the ability of producing secondary metabolites.</title>
        <authorList>
            <person name="Omura S."/>
            <person name="Ikeda H."/>
            <person name="Ishikawa J."/>
            <person name="Hanamoto A."/>
            <person name="Takahashi C."/>
            <person name="Shinose M."/>
            <person name="Takahashi Y."/>
            <person name="Horikawa H."/>
            <person name="Nakazawa H."/>
            <person name="Osonoe T."/>
            <person name="Kikuchi H."/>
            <person name="Shiba T."/>
            <person name="Sakaki Y."/>
            <person name="Hattori M."/>
        </authorList>
    </citation>
    <scope>NUCLEOTIDE SEQUENCE [LARGE SCALE GENOMIC DNA]</scope>
    <source>
        <strain>ATCC 31267 / DSM 46492 / JCM 5070 / NBRC 14893 / NCIMB 12804 / NRRL 8165 / MA-4680</strain>
    </source>
</reference>
<reference key="2">
    <citation type="journal article" date="2003" name="Nat. Biotechnol.">
        <title>Complete genome sequence and comparative analysis of the industrial microorganism Streptomyces avermitilis.</title>
        <authorList>
            <person name="Ikeda H."/>
            <person name="Ishikawa J."/>
            <person name="Hanamoto A."/>
            <person name="Shinose M."/>
            <person name="Kikuchi H."/>
            <person name="Shiba T."/>
            <person name="Sakaki Y."/>
            <person name="Hattori M."/>
            <person name="Omura S."/>
        </authorList>
    </citation>
    <scope>NUCLEOTIDE SEQUENCE [LARGE SCALE GENOMIC DNA]</scope>
    <source>
        <strain>ATCC 31267 / DSM 46492 / JCM 5070 / NBRC 14893 / NCIMB 12804 / NRRL 8165 / MA-4680</strain>
    </source>
</reference>
<evidence type="ECO:0000255" key="1">
    <source>
        <dbReference type="HAMAP-Rule" id="MF_00527"/>
    </source>
</evidence>
<evidence type="ECO:0000256" key="2">
    <source>
        <dbReference type="SAM" id="MobiDB-lite"/>
    </source>
</evidence>
<sequence>MIAAPDRTPLTREFFARPVLDVAPDLLGRVLVRTTPDGPIELRVTEVEAYDGPSDPGSHAYRGRTARNGVMFGPPGHVYVYFTYGMWHCMNLVCGPEGRASAVLLRAGEIIEGAELARTRRLSARNDKELAKGPARLATALEVDRALDGTDACAPEGGPLTLLSGTPVPPDQVRNGPRTGVSGDGGVHPWRFWIDNDPTVSPYRAHTPRRRRT</sequence>
<accession>Q829C5</accession>
<organism>
    <name type="scientific">Streptomyces avermitilis (strain ATCC 31267 / DSM 46492 / JCM 5070 / NBRC 14893 / NCIMB 12804 / NRRL 8165 / MA-4680)</name>
    <dbReference type="NCBI Taxonomy" id="227882"/>
    <lineage>
        <taxon>Bacteria</taxon>
        <taxon>Bacillati</taxon>
        <taxon>Actinomycetota</taxon>
        <taxon>Actinomycetes</taxon>
        <taxon>Kitasatosporales</taxon>
        <taxon>Streptomycetaceae</taxon>
        <taxon>Streptomyces</taxon>
    </lineage>
</organism>
<comment type="similarity">
    <text evidence="1">Belongs to the DNA glycosylase MPG family.</text>
</comment>